<comment type="function">
    <text evidence="1">Reversibly transfers an adenylyl group from ATP to 4'-phosphopantetheine, yielding dephospho-CoA (dPCoA) and pyrophosphate.</text>
</comment>
<comment type="catalytic activity">
    <reaction evidence="1">
        <text>(R)-4'-phosphopantetheine + ATP + H(+) = 3'-dephospho-CoA + diphosphate</text>
        <dbReference type="Rhea" id="RHEA:19801"/>
        <dbReference type="ChEBI" id="CHEBI:15378"/>
        <dbReference type="ChEBI" id="CHEBI:30616"/>
        <dbReference type="ChEBI" id="CHEBI:33019"/>
        <dbReference type="ChEBI" id="CHEBI:57328"/>
        <dbReference type="ChEBI" id="CHEBI:61723"/>
        <dbReference type="EC" id="2.7.7.3"/>
    </reaction>
</comment>
<comment type="cofactor">
    <cofactor evidence="1">
        <name>Mg(2+)</name>
        <dbReference type="ChEBI" id="CHEBI:18420"/>
    </cofactor>
</comment>
<comment type="pathway">
    <text evidence="1">Cofactor biosynthesis; coenzyme A biosynthesis; CoA from (R)-pantothenate: step 4/5.</text>
</comment>
<comment type="subunit">
    <text evidence="1">Homohexamer.</text>
</comment>
<comment type="subcellular location">
    <subcellularLocation>
        <location evidence="1">Cytoplasm</location>
    </subcellularLocation>
</comment>
<comment type="similarity">
    <text evidence="1">Belongs to the bacterial CoaD family.</text>
</comment>
<proteinExistence type="inferred from homology"/>
<sequence length="159" mass="17842">MKIAVYPGSFDPITNGHLDIIERGSKVFDKLIIGVLVNVDKKGLFEIEERVELIKKVTKHIKNVEVLSFNGLLIDFLKASNAKIILKGLRAVSDFEYEFKMALMNNKLDPDIETVFMMTSAQYSYLSSSSVKQVAKFGGCIEGLVPKEIISDVIRRSKI</sequence>
<evidence type="ECO:0000255" key="1">
    <source>
        <dbReference type="HAMAP-Rule" id="MF_00151"/>
    </source>
</evidence>
<feature type="chain" id="PRO_1000096780" description="Phosphopantetheine adenylyltransferase">
    <location>
        <begin position="1"/>
        <end position="159"/>
    </location>
</feature>
<feature type="binding site" evidence="1">
    <location>
        <begin position="9"/>
        <end position="10"/>
    </location>
    <ligand>
        <name>ATP</name>
        <dbReference type="ChEBI" id="CHEBI:30616"/>
    </ligand>
</feature>
<feature type="binding site" evidence="1">
    <location>
        <position position="9"/>
    </location>
    <ligand>
        <name>substrate</name>
    </ligand>
</feature>
<feature type="binding site" evidence="1">
    <location>
        <position position="17"/>
    </location>
    <ligand>
        <name>ATP</name>
        <dbReference type="ChEBI" id="CHEBI:30616"/>
    </ligand>
</feature>
<feature type="binding site" evidence="1">
    <location>
        <position position="41"/>
    </location>
    <ligand>
        <name>substrate</name>
    </ligand>
</feature>
<feature type="binding site" evidence="1">
    <location>
        <position position="73"/>
    </location>
    <ligand>
        <name>substrate</name>
    </ligand>
</feature>
<feature type="binding site" evidence="1">
    <location>
        <position position="87"/>
    </location>
    <ligand>
        <name>substrate</name>
    </ligand>
</feature>
<feature type="binding site" evidence="1">
    <location>
        <begin position="88"/>
        <end position="90"/>
    </location>
    <ligand>
        <name>ATP</name>
        <dbReference type="ChEBI" id="CHEBI:30616"/>
    </ligand>
</feature>
<feature type="binding site" evidence="1">
    <location>
        <position position="98"/>
    </location>
    <ligand>
        <name>ATP</name>
        <dbReference type="ChEBI" id="CHEBI:30616"/>
    </ligand>
</feature>
<feature type="binding site" evidence="1">
    <location>
        <begin position="123"/>
        <end position="129"/>
    </location>
    <ligand>
        <name>ATP</name>
        <dbReference type="ChEBI" id="CHEBI:30616"/>
    </ligand>
</feature>
<feature type="site" description="Transition state stabilizer" evidence="1">
    <location>
        <position position="17"/>
    </location>
</feature>
<protein>
    <recommendedName>
        <fullName evidence="1">Phosphopantetheine adenylyltransferase</fullName>
        <ecNumber evidence="1">2.7.7.3</ecNumber>
    </recommendedName>
    <alternativeName>
        <fullName evidence="1">Dephospho-CoA pyrophosphorylase</fullName>
    </alternativeName>
    <alternativeName>
        <fullName evidence="1">Pantetheine-phosphate adenylyltransferase</fullName>
        <shortName evidence="1">PPAT</shortName>
    </alternativeName>
</protein>
<keyword id="KW-0067">ATP-binding</keyword>
<keyword id="KW-0173">Coenzyme A biosynthesis</keyword>
<keyword id="KW-0963">Cytoplasm</keyword>
<keyword id="KW-0460">Magnesium</keyword>
<keyword id="KW-0547">Nucleotide-binding</keyword>
<keyword id="KW-0548">Nucleotidyltransferase</keyword>
<keyword id="KW-0808">Transferase</keyword>
<organism>
    <name type="scientific">Clostridium botulinum (strain Eklund 17B / Type B)</name>
    <dbReference type="NCBI Taxonomy" id="935198"/>
    <lineage>
        <taxon>Bacteria</taxon>
        <taxon>Bacillati</taxon>
        <taxon>Bacillota</taxon>
        <taxon>Clostridia</taxon>
        <taxon>Eubacteriales</taxon>
        <taxon>Clostridiaceae</taxon>
        <taxon>Clostridium</taxon>
    </lineage>
</organism>
<dbReference type="EC" id="2.7.7.3" evidence="1"/>
<dbReference type="EMBL" id="CP001056">
    <property type="protein sequence ID" value="ACD23628.1"/>
    <property type="molecule type" value="Genomic_DNA"/>
</dbReference>
<dbReference type="SMR" id="B2TJ12"/>
<dbReference type="KEGG" id="cbk:CLL_A1230"/>
<dbReference type="PATRIC" id="fig|935198.13.peg.1175"/>
<dbReference type="HOGENOM" id="CLU_100149_0_1_9"/>
<dbReference type="UniPathway" id="UPA00241">
    <property type="reaction ID" value="UER00355"/>
</dbReference>
<dbReference type="Proteomes" id="UP000001195">
    <property type="component" value="Chromosome"/>
</dbReference>
<dbReference type="GO" id="GO:0005737">
    <property type="term" value="C:cytoplasm"/>
    <property type="evidence" value="ECO:0007669"/>
    <property type="project" value="UniProtKB-SubCell"/>
</dbReference>
<dbReference type="GO" id="GO:0005524">
    <property type="term" value="F:ATP binding"/>
    <property type="evidence" value="ECO:0007669"/>
    <property type="project" value="UniProtKB-KW"/>
</dbReference>
<dbReference type="GO" id="GO:0004595">
    <property type="term" value="F:pantetheine-phosphate adenylyltransferase activity"/>
    <property type="evidence" value="ECO:0007669"/>
    <property type="project" value="UniProtKB-UniRule"/>
</dbReference>
<dbReference type="GO" id="GO:0015937">
    <property type="term" value="P:coenzyme A biosynthetic process"/>
    <property type="evidence" value="ECO:0007669"/>
    <property type="project" value="UniProtKB-UniRule"/>
</dbReference>
<dbReference type="CDD" id="cd02163">
    <property type="entry name" value="PPAT"/>
    <property type="match status" value="1"/>
</dbReference>
<dbReference type="Gene3D" id="3.40.50.620">
    <property type="entry name" value="HUPs"/>
    <property type="match status" value="1"/>
</dbReference>
<dbReference type="HAMAP" id="MF_00151">
    <property type="entry name" value="PPAT_bact"/>
    <property type="match status" value="1"/>
</dbReference>
<dbReference type="InterPro" id="IPR004821">
    <property type="entry name" value="Cyt_trans-like"/>
</dbReference>
<dbReference type="InterPro" id="IPR001980">
    <property type="entry name" value="PPAT"/>
</dbReference>
<dbReference type="InterPro" id="IPR014729">
    <property type="entry name" value="Rossmann-like_a/b/a_fold"/>
</dbReference>
<dbReference type="NCBIfam" id="TIGR01510">
    <property type="entry name" value="coaD_prev_kdtB"/>
    <property type="match status" value="1"/>
</dbReference>
<dbReference type="NCBIfam" id="TIGR00125">
    <property type="entry name" value="cyt_tran_rel"/>
    <property type="match status" value="1"/>
</dbReference>
<dbReference type="PANTHER" id="PTHR21342">
    <property type="entry name" value="PHOSPHOPANTETHEINE ADENYLYLTRANSFERASE"/>
    <property type="match status" value="1"/>
</dbReference>
<dbReference type="PANTHER" id="PTHR21342:SF1">
    <property type="entry name" value="PHOSPHOPANTETHEINE ADENYLYLTRANSFERASE"/>
    <property type="match status" value="1"/>
</dbReference>
<dbReference type="Pfam" id="PF01467">
    <property type="entry name" value="CTP_transf_like"/>
    <property type="match status" value="1"/>
</dbReference>
<dbReference type="PRINTS" id="PR01020">
    <property type="entry name" value="LPSBIOSNTHSS"/>
</dbReference>
<dbReference type="SUPFAM" id="SSF52374">
    <property type="entry name" value="Nucleotidylyl transferase"/>
    <property type="match status" value="1"/>
</dbReference>
<accession>B2TJ12</accession>
<name>COAD_CLOBB</name>
<gene>
    <name evidence="1" type="primary">coaD</name>
    <name type="ordered locus">CLL_A1230</name>
</gene>
<reference key="1">
    <citation type="submission" date="2008-04" db="EMBL/GenBank/DDBJ databases">
        <title>Complete sequence of Clostridium botulinum strain Eklund.</title>
        <authorList>
            <person name="Brinkac L.M."/>
            <person name="Brown J.L."/>
            <person name="Bruce D."/>
            <person name="Detter C."/>
            <person name="Munk C."/>
            <person name="Smith L.A."/>
            <person name="Smith T.J."/>
            <person name="Sutton G."/>
            <person name="Brettin T.S."/>
        </authorList>
    </citation>
    <scope>NUCLEOTIDE SEQUENCE [LARGE SCALE GENOMIC DNA]</scope>
    <source>
        <strain>Eklund 17B / Type B</strain>
    </source>
</reference>